<dbReference type="EMBL" id="CP000950">
    <property type="protein sequence ID" value="ACA66787.1"/>
    <property type="molecule type" value="Genomic_DNA"/>
</dbReference>
<dbReference type="RefSeq" id="WP_012303486.1">
    <property type="nucleotide sequence ID" value="NZ_CP009792.1"/>
</dbReference>
<dbReference type="SMR" id="B1JKI2"/>
<dbReference type="KEGG" id="ypy:YPK_0484"/>
<dbReference type="PATRIC" id="fig|502800.11.peg.1094"/>
<dbReference type="GO" id="GO:0005886">
    <property type="term" value="C:plasma membrane"/>
    <property type="evidence" value="ECO:0007669"/>
    <property type="project" value="UniProtKB-SubCell"/>
</dbReference>
<dbReference type="GO" id="GO:0022857">
    <property type="term" value="F:transmembrane transporter activity"/>
    <property type="evidence" value="ECO:0007669"/>
    <property type="project" value="UniProtKB-UniRule"/>
</dbReference>
<dbReference type="Gene3D" id="2.40.30.170">
    <property type="match status" value="1"/>
</dbReference>
<dbReference type="Gene3D" id="2.40.50.100">
    <property type="match status" value="1"/>
</dbReference>
<dbReference type="HAMAP" id="MF_01544">
    <property type="entry name" value="AaeA"/>
    <property type="match status" value="1"/>
</dbReference>
<dbReference type="InterPro" id="IPR043602">
    <property type="entry name" value="CusB-like_dom_1"/>
</dbReference>
<dbReference type="InterPro" id="IPR032317">
    <property type="entry name" value="CusB_D23"/>
</dbReference>
<dbReference type="InterPro" id="IPR050393">
    <property type="entry name" value="MFP_Efflux_Pump"/>
</dbReference>
<dbReference type="InterPro" id="IPR022871">
    <property type="entry name" value="PHBA_efflux_pump_AaeA"/>
</dbReference>
<dbReference type="InterPro" id="IPR006143">
    <property type="entry name" value="RND_pump_MFP"/>
</dbReference>
<dbReference type="NCBIfam" id="NF007850">
    <property type="entry name" value="PRK10559.1"/>
    <property type="match status" value="1"/>
</dbReference>
<dbReference type="NCBIfam" id="TIGR01730">
    <property type="entry name" value="RND_mfp"/>
    <property type="match status" value="1"/>
</dbReference>
<dbReference type="PANTHER" id="PTHR30367:SF12">
    <property type="entry name" value="P-HYDROXYBENZOIC ACID EFFLUX PUMP SUBUNIT AAEA"/>
    <property type="match status" value="1"/>
</dbReference>
<dbReference type="PANTHER" id="PTHR30367">
    <property type="entry name" value="P-HYDROXYBENZOIC ACID EFFLUX PUMP SUBUNIT AAEA-RELATED"/>
    <property type="match status" value="1"/>
</dbReference>
<dbReference type="Pfam" id="PF00529">
    <property type="entry name" value="CusB_dom_1"/>
    <property type="match status" value="1"/>
</dbReference>
<dbReference type="Pfam" id="PF16576">
    <property type="entry name" value="HlyD_D23"/>
    <property type="match status" value="1"/>
</dbReference>
<dbReference type="SUPFAM" id="SSF111369">
    <property type="entry name" value="HlyD-like secretion proteins"/>
    <property type="match status" value="1"/>
</dbReference>
<feature type="chain" id="PRO_1000185278" description="p-hydroxybenzoic acid efflux pump subunit AaeA">
    <location>
        <begin position="1"/>
        <end position="311"/>
    </location>
</feature>
<feature type="transmembrane region" description="Helical" evidence="1">
    <location>
        <begin position="11"/>
        <end position="31"/>
    </location>
</feature>
<keyword id="KW-0997">Cell inner membrane</keyword>
<keyword id="KW-1003">Cell membrane</keyword>
<keyword id="KW-0472">Membrane</keyword>
<keyword id="KW-0812">Transmembrane</keyword>
<keyword id="KW-1133">Transmembrane helix</keyword>
<keyword id="KW-0813">Transport</keyword>
<evidence type="ECO:0000255" key="1">
    <source>
        <dbReference type="HAMAP-Rule" id="MF_01544"/>
    </source>
</evidence>
<name>AAEA_YERPY</name>
<gene>
    <name evidence="1" type="primary">aaeA</name>
    <name type="ordered locus">YPK_0484</name>
</gene>
<comment type="function">
    <text evidence="1">Forms an efflux pump with AaeB.</text>
</comment>
<comment type="subcellular location">
    <subcellularLocation>
        <location evidence="1">Cell inner membrane</location>
        <topology evidence="1">Single-pass membrane protein</topology>
    </subcellularLocation>
</comment>
<comment type="similarity">
    <text evidence="1">Belongs to the membrane fusion protein (MFP) (TC 8.A.1) family.</text>
</comment>
<proteinExistence type="inferred from homology"/>
<reference key="1">
    <citation type="submission" date="2008-02" db="EMBL/GenBank/DDBJ databases">
        <title>Complete sequence of Yersinia pseudotuberculosis YPIII.</title>
        <authorList>
            <consortium name="US DOE Joint Genome Institute"/>
            <person name="Copeland A."/>
            <person name="Lucas S."/>
            <person name="Lapidus A."/>
            <person name="Glavina del Rio T."/>
            <person name="Dalin E."/>
            <person name="Tice H."/>
            <person name="Bruce D."/>
            <person name="Goodwin L."/>
            <person name="Pitluck S."/>
            <person name="Munk A.C."/>
            <person name="Brettin T."/>
            <person name="Detter J.C."/>
            <person name="Han C."/>
            <person name="Tapia R."/>
            <person name="Schmutz J."/>
            <person name="Larimer F."/>
            <person name="Land M."/>
            <person name="Hauser L."/>
            <person name="Challacombe J.F."/>
            <person name="Green L."/>
            <person name="Lindler L.E."/>
            <person name="Nikolich M.P."/>
            <person name="Richardson P."/>
        </authorList>
    </citation>
    <scope>NUCLEOTIDE SEQUENCE [LARGE SCALE GENOMIC DNA]</scope>
    <source>
        <strain>YPIII</strain>
    </source>
</reference>
<accession>B1JKI2</accession>
<protein>
    <recommendedName>
        <fullName evidence="1">p-hydroxybenzoic acid efflux pump subunit AaeA</fullName>
        <shortName evidence="1">pHBA efflux pump protein A</shortName>
    </recommendedName>
</protein>
<organism>
    <name type="scientific">Yersinia pseudotuberculosis serotype O:3 (strain YPIII)</name>
    <dbReference type="NCBI Taxonomy" id="502800"/>
    <lineage>
        <taxon>Bacteria</taxon>
        <taxon>Pseudomonadati</taxon>
        <taxon>Pseudomonadota</taxon>
        <taxon>Gammaproteobacteria</taxon>
        <taxon>Enterobacterales</taxon>
        <taxon>Yersiniaceae</taxon>
        <taxon>Yersinia</taxon>
    </lineage>
</organism>
<sequence>MSTFSLKIIRVGITVLVVVLAVIAIFNVWAFYTESPWTRDAKFTADVVAIAPDVSGLLTEVPVKDNQLVQKGQILFVIDQPRYQQALAEAEADVAYYQTLAAEKQRESSRRHRLGIQALSQEEIDQASNVLQTVQHQLAKAIAVRDLARLDLERTTVRAPAEGWVTNLNVHAGEFINRGATAVALVKKDTFYILAYLEETKLEGVKPGYRAEITPLGSNRILHGTVDSISAGVTNSSSSADSKGLATIDNNLEWVRLAQRVPVKIHLDSEDQQYLYPAGTTATVVITGPNDRDPHQVSPMTKLMHRLREFG</sequence>